<sequence>MLFSPPLQRATLIQRYKRFLADVITPDGTTLTLHCPNTGAMTGCATPGDTVWYSTSENTKRKYPHTWELTETQSGAFICVNTLRANQLTKEAIQENRLPALAGYNILNSEVKYGAERSRIDFMLQADFRPDCYIEVKSVTLAEKENGYFPDAITERGQKHLRELMGVAAAGHRAVVVFAVLHSAITRFSPARHIDIKYAQLLSEAQNKGVEVLAYKAELSATKMELNEPVPITL</sequence>
<name>SFSA_SALTI</name>
<evidence type="ECO:0000255" key="1">
    <source>
        <dbReference type="HAMAP-Rule" id="MF_00095"/>
    </source>
</evidence>
<organism>
    <name type="scientific">Salmonella typhi</name>
    <dbReference type="NCBI Taxonomy" id="90370"/>
    <lineage>
        <taxon>Bacteria</taxon>
        <taxon>Pseudomonadati</taxon>
        <taxon>Pseudomonadota</taxon>
        <taxon>Gammaproteobacteria</taxon>
        <taxon>Enterobacterales</taxon>
        <taxon>Enterobacteriaceae</taxon>
        <taxon>Salmonella</taxon>
    </lineage>
</organism>
<feature type="chain" id="PRO_0000152303" description="Sugar fermentation stimulation protein A">
    <location>
        <begin position="1"/>
        <end position="234"/>
    </location>
</feature>
<feature type="DNA-binding region" description="H-T-H motif" evidence="1">
    <location>
        <begin position="201"/>
        <end position="220"/>
    </location>
</feature>
<proteinExistence type="inferred from homology"/>
<keyword id="KW-0238">DNA-binding</keyword>
<comment type="function">
    <text evidence="1">Binds to DNA non-specifically. Could be a regulatory factor involved in maltose metabolism.</text>
</comment>
<comment type="similarity">
    <text evidence="1">Belongs to the SfsA family.</text>
</comment>
<accession>Q8Z9C1</accession>
<gene>
    <name evidence="1" type="primary">sfsA</name>
    <name type="ordered locus">STY0212</name>
    <name type="ordered locus">t0195</name>
</gene>
<reference key="1">
    <citation type="journal article" date="2001" name="Nature">
        <title>Complete genome sequence of a multiple drug resistant Salmonella enterica serovar Typhi CT18.</title>
        <authorList>
            <person name="Parkhill J."/>
            <person name="Dougan G."/>
            <person name="James K.D."/>
            <person name="Thomson N.R."/>
            <person name="Pickard D."/>
            <person name="Wain J."/>
            <person name="Churcher C.M."/>
            <person name="Mungall K.L."/>
            <person name="Bentley S.D."/>
            <person name="Holden M.T.G."/>
            <person name="Sebaihia M."/>
            <person name="Baker S."/>
            <person name="Basham D."/>
            <person name="Brooks K."/>
            <person name="Chillingworth T."/>
            <person name="Connerton P."/>
            <person name="Cronin A."/>
            <person name="Davis P."/>
            <person name="Davies R.M."/>
            <person name="Dowd L."/>
            <person name="White N."/>
            <person name="Farrar J."/>
            <person name="Feltwell T."/>
            <person name="Hamlin N."/>
            <person name="Haque A."/>
            <person name="Hien T.T."/>
            <person name="Holroyd S."/>
            <person name="Jagels K."/>
            <person name="Krogh A."/>
            <person name="Larsen T.S."/>
            <person name="Leather S."/>
            <person name="Moule S."/>
            <person name="O'Gaora P."/>
            <person name="Parry C."/>
            <person name="Quail M.A."/>
            <person name="Rutherford K.M."/>
            <person name="Simmonds M."/>
            <person name="Skelton J."/>
            <person name="Stevens K."/>
            <person name="Whitehead S."/>
            <person name="Barrell B.G."/>
        </authorList>
    </citation>
    <scope>NUCLEOTIDE SEQUENCE [LARGE SCALE GENOMIC DNA]</scope>
    <source>
        <strain>CT18</strain>
    </source>
</reference>
<reference key="2">
    <citation type="journal article" date="2003" name="J. Bacteriol.">
        <title>Comparative genomics of Salmonella enterica serovar Typhi strains Ty2 and CT18.</title>
        <authorList>
            <person name="Deng W."/>
            <person name="Liou S.-R."/>
            <person name="Plunkett G. III"/>
            <person name="Mayhew G.F."/>
            <person name="Rose D.J."/>
            <person name="Burland V."/>
            <person name="Kodoyianni V."/>
            <person name="Schwartz D.C."/>
            <person name="Blattner F.R."/>
        </authorList>
    </citation>
    <scope>NUCLEOTIDE SEQUENCE [LARGE SCALE GENOMIC DNA]</scope>
    <source>
        <strain>ATCC 700931 / Ty2</strain>
    </source>
</reference>
<dbReference type="EMBL" id="AL513382">
    <property type="protein sequence ID" value="CAD01348.1"/>
    <property type="molecule type" value="Genomic_DNA"/>
</dbReference>
<dbReference type="EMBL" id="AE014613">
    <property type="protein sequence ID" value="AAO67927.1"/>
    <property type="molecule type" value="Genomic_DNA"/>
</dbReference>
<dbReference type="RefSeq" id="NP_454803.1">
    <property type="nucleotide sequence ID" value="NC_003198.1"/>
</dbReference>
<dbReference type="RefSeq" id="WP_000899414.1">
    <property type="nucleotide sequence ID" value="NZ_WSUR01000009.1"/>
</dbReference>
<dbReference type="SMR" id="Q8Z9C1"/>
<dbReference type="STRING" id="220341.gene:17584250"/>
<dbReference type="KEGG" id="stt:t0195"/>
<dbReference type="KEGG" id="sty:STY0212"/>
<dbReference type="PATRIC" id="fig|220341.7.peg.215"/>
<dbReference type="eggNOG" id="COG1489">
    <property type="taxonomic scope" value="Bacteria"/>
</dbReference>
<dbReference type="HOGENOM" id="CLU_052299_2_0_6"/>
<dbReference type="OMA" id="CANTGPM"/>
<dbReference type="OrthoDB" id="9802365at2"/>
<dbReference type="Proteomes" id="UP000000541">
    <property type="component" value="Chromosome"/>
</dbReference>
<dbReference type="Proteomes" id="UP000002670">
    <property type="component" value="Chromosome"/>
</dbReference>
<dbReference type="GO" id="GO:0003677">
    <property type="term" value="F:DNA binding"/>
    <property type="evidence" value="ECO:0007669"/>
    <property type="project" value="UniProtKB-KW"/>
</dbReference>
<dbReference type="CDD" id="cd22359">
    <property type="entry name" value="SfsA-like_bacterial"/>
    <property type="match status" value="1"/>
</dbReference>
<dbReference type="FunFam" id="2.40.50.580:FF:000001">
    <property type="entry name" value="Sugar fermentation stimulation protein A"/>
    <property type="match status" value="1"/>
</dbReference>
<dbReference type="FunFam" id="3.40.1350.60:FF:000001">
    <property type="entry name" value="Sugar fermentation stimulation protein A"/>
    <property type="match status" value="1"/>
</dbReference>
<dbReference type="Gene3D" id="2.40.50.580">
    <property type="match status" value="1"/>
</dbReference>
<dbReference type="Gene3D" id="3.40.1350.60">
    <property type="match status" value="1"/>
</dbReference>
<dbReference type="HAMAP" id="MF_00095">
    <property type="entry name" value="SfsA"/>
    <property type="match status" value="1"/>
</dbReference>
<dbReference type="InterPro" id="IPR005224">
    <property type="entry name" value="SfsA"/>
</dbReference>
<dbReference type="InterPro" id="IPR040452">
    <property type="entry name" value="SfsA_C"/>
</dbReference>
<dbReference type="InterPro" id="IPR041465">
    <property type="entry name" value="SfsA_N"/>
</dbReference>
<dbReference type="NCBIfam" id="TIGR00230">
    <property type="entry name" value="sfsA"/>
    <property type="match status" value="1"/>
</dbReference>
<dbReference type="PANTHER" id="PTHR30545">
    <property type="entry name" value="SUGAR FERMENTATION STIMULATION PROTEIN A"/>
    <property type="match status" value="1"/>
</dbReference>
<dbReference type="PANTHER" id="PTHR30545:SF2">
    <property type="entry name" value="SUGAR FERMENTATION STIMULATION PROTEIN A"/>
    <property type="match status" value="1"/>
</dbReference>
<dbReference type="Pfam" id="PF03749">
    <property type="entry name" value="SfsA"/>
    <property type="match status" value="1"/>
</dbReference>
<dbReference type="Pfam" id="PF17746">
    <property type="entry name" value="SfsA_N"/>
    <property type="match status" value="1"/>
</dbReference>
<protein>
    <recommendedName>
        <fullName evidence="1">Sugar fermentation stimulation protein A</fullName>
    </recommendedName>
</protein>